<comment type="function">
    <text evidence="1">Component of the Mediator complex, a coactivator involved in the regulated transcription of nearly all RNA polymerase II-dependent genes. Mediator functions as a bridge to convey information from gene-specific regulatory proteins to the basal RNA polymerase II transcription machinery. Mediator is recruited to promoters by direct interactions with regulatory proteins and serves as a scaffold for the assembly of a functional preinitiation complex with RNA polymerase II and the general transcription factors (By similarity).</text>
</comment>
<comment type="subunit">
    <text evidence="1">Component of the Mediator complex.</text>
</comment>
<comment type="subcellular location">
    <subcellularLocation>
        <location evidence="1">Nucleus</location>
    </subcellularLocation>
</comment>
<comment type="similarity">
    <text evidence="3">Belongs to the Mediator complex subunit 10 family.</text>
</comment>
<keyword id="KW-0010">Activator</keyword>
<keyword id="KW-0539">Nucleus</keyword>
<keyword id="KW-1185">Reference proteome</keyword>
<keyword id="KW-0804">Transcription</keyword>
<keyword id="KW-0805">Transcription regulation</keyword>
<sequence>MAEAARQELENQLRQTIETLVEISLLVHDTTGSQENKEGLIEQMDTLVKEFQRLKEIKCDKQIPIDVIDYIDQGRNPDVYTREFVELLLKQNQFIHGKMDIYTVSKGVRESTSDDIPLDISCGAHSNTEISTNPGQKRQGNVS</sequence>
<proteinExistence type="inferred from homology"/>
<reference key="1">
    <citation type="journal article" date="2004" name="Nature">
        <title>Genome evolution in yeasts.</title>
        <authorList>
            <person name="Dujon B."/>
            <person name="Sherman D."/>
            <person name="Fischer G."/>
            <person name="Durrens P."/>
            <person name="Casaregola S."/>
            <person name="Lafontaine I."/>
            <person name="de Montigny J."/>
            <person name="Marck C."/>
            <person name="Neuveglise C."/>
            <person name="Talla E."/>
            <person name="Goffard N."/>
            <person name="Frangeul L."/>
            <person name="Aigle M."/>
            <person name="Anthouard V."/>
            <person name="Babour A."/>
            <person name="Barbe V."/>
            <person name="Barnay S."/>
            <person name="Blanchin S."/>
            <person name="Beckerich J.-M."/>
            <person name="Beyne E."/>
            <person name="Bleykasten C."/>
            <person name="Boisrame A."/>
            <person name="Boyer J."/>
            <person name="Cattolico L."/>
            <person name="Confanioleri F."/>
            <person name="de Daruvar A."/>
            <person name="Despons L."/>
            <person name="Fabre E."/>
            <person name="Fairhead C."/>
            <person name="Ferry-Dumazet H."/>
            <person name="Groppi A."/>
            <person name="Hantraye F."/>
            <person name="Hennequin C."/>
            <person name="Jauniaux N."/>
            <person name="Joyet P."/>
            <person name="Kachouri R."/>
            <person name="Kerrest A."/>
            <person name="Koszul R."/>
            <person name="Lemaire M."/>
            <person name="Lesur I."/>
            <person name="Ma L."/>
            <person name="Muller H."/>
            <person name="Nicaud J.-M."/>
            <person name="Nikolski M."/>
            <person name="Oztas S."/>
            <person name="Ozier-Kalogeropoulos O."/>
            <person name="Pellenz S."/>
            <person name="Potier S."/>
            <person name="Richard G.-F."/>
            <person name="Straub M.-L."/>
            <person name="Suleau A."/>
            <person name="Swennen D."/>
            <person name="Tekaia F."/>
            <person name="Wesolowski-Louvel M."/>
            <person name="Westhof E."/>
            <person name="Wirth B."/>
            <person name="Zeniou-Meyer M."/>
            <person name="Zivanovic Y."/>
            <person name="Bolotin-Fukuhara M."/>
            <person name="Thierry A."/>
            <person name="Bouchier C."/>
            <person name="Caudron B."/>
            <person name="Scarpelli C."/>
            <person name="Gaillardin C."/>
            <person name="Weissenbach J."/>
            <person name="Wincker P."/>
            <person name="Souciet J.-L."/>
        </authorList>
    </citation>
    <scope>NUCLEOTIDE SEQUENCE [LARGE SCALE GENOMIC DNA]</scope>
    <source>
        <strain>CLIB 122 / E 150</strain>
    </source>
</reference>
<protein>
    <recommendedName>
        <fullName>Mediator of RNA polymerase II transcription subunit 10</fullName>
    </recommendedName>
    <alternativeName>
        <fullName>Mediator complex subunit 10</fullName>
    </alternativeName>
</protein>
<dbReference type="EMBL" id="CR382131">
    <property type="protein sequence ID" value="CAG79615.1"/>
    <property type="molecule type" value="Genomic_DNA"/>
</dbReference>
<dbReference type="RefSeq" id="XP_504022.1">
    <property type="nucleotide sequence ID" value="XM_504022.1"/>
</dbReference>
<dbReference type="SMR" id="Q6C5P0"/>
<dbReference type="FunCoup" id="Q6C5P0">
    <property type="interactions" value="604"/>
</dbReference>
<dbReference type="STRING" id="284591.Q6C5P0"/>
<dbReference type="EnsemblFungi" id="CAG79615">
    <property type="protein sequence ID" value="CAG79615"/>
    <property type="gene ID" value="YALI0_E16456g"/>
</dbReference>
<dbReference type="VEuPathDB" id="FungiDB:YALI0_E16456g"/>
<dbReference type="HOGENOM" id="CLU_1807716_0_0_1"/>
<dbReference type="InParanoid" id="Q6C5P0"/>
<dbReference type="OMA" id="EYIDQGW"/>
<dbReference type="OrthoDB" id="121535at4891"/>
<dbReference type="Proteomes" id="UP000001300">
    <property type="component" value="Chromosome E"/>
</dbReference>
<dbReference type="GO" id="GO:0016592">
    <property type="term" value="C:mediator complex"/>
    <property type="evidence" value="ECO:0007669"/>
    <property type="project" value="InterPro"/>
</dbReference>
<dbReference type="GO" id="GO:0003712">
    <property type="term" value="F:transcription coregulator activity"/>
    <property type="evidence" value="ECO:0007669"/>
    <property type="project" value="InterPro"/>
</dbReference>
<dbReference type="GO" id="GO:0006357">
    <property type="term" value="P:regulation of transcription by RNA polymerase II"/>
    <property type="evidence" value="ECO:0007669"/>
    <property type="project" value="InterPro"/>
</dbReference>
<dbReference type="InterPro" id="IPR019145">
    <property type="entry name" value="Mediator_Med10"/>
</dbReference>
<dbReference type="Pfam" id="PF09748">
    <property type="entry name" value="Med10"/>
    <property type="match status" value="1"/>
</dbReference>
<accession>Q6C5P0</accession>
<organism>
    <name type="scientific">Yarrowia lipolytica (strain CLIB 122 / E 150)</name>
    <name type="common">Yeast</name>
    <name type="synonym">Candida lipolytica</name>
    <dbReference type="NCBI Taxonomy" id="284591"/>
    <lineage>
        <taxon>Eukaryota</taxon>
        <taxon>Fungi</taxon>
        <taxon>Dikarya</taxon>
        <taxon>Ascomycota</taxon>
        <taxon>Saccharomycotina</taxon>
        <taxon>Dipodascomycetes</taxon>
        <taxon>Dipodascales</taxon>
        <taxon>Dipodascales incertae sedis</taxon>
        <taxon>Yarrowia</taxon>
    </lineage>
</organism>
<feature type="chain" id="PRO_0000303178" description="Mediator of RNA polymerase II transcription subunit 10">
    <location>
        <begin position="1"/>
        <end position="143"/>
    </location>
</feature>
<feature type="region of interest" description="Disordered" evidence="2">
    <location>
        <begin position="123"/>
        <end position="143"/>
    </location>
</feature>
<feature type="compositionally biased region" description="Polar residues" evidence="2">
    <location>
        <begin position="124"/>
        <end position="143"/>
    </location>
</feature>
<evidence type="ECO:0000250" key="1"/>
<evidence type="ECO:0000256" key="2">
    <source>
        <dbReference type="SAM" id="MobiDB-lite"/>
    </source>
</evidence>
<evidence type="ECO:0000305" key="3"/>
<gene>
    <name type="primary">NUT2</name>
    <name type="synonym">MED10</name>
    <name type="ordered locus">YALI0E16456g</name>
</gene>
<name>MED10_YARLI</name>